<protein>
    <recommendedName>
        <fullName evidence="1">Phosphoenolpyruvate carboxykinase (ATP)</fullName>
        <shortName evidence="1">PCK</shortName>
        <shortName evidence="1">PEP carboxykinase</shortName>
        <shortName evidence="1">PEPCK</shortName>
        <ecNumber evidence="1">4.1.1.49</ecNumber>
    </recommendedName>
</protein>
<feature type="chain" id="PRO_1000125059" description="Phosphoenolpyruvate carboxykinase (ATP)">
    <location>
        <begin position="1"/>
        <end position="517"/>
    </location>
</feature>
<feature type="binding site" evidence="1">
    <location>
        <position position="46"/>
    </location>
    <ligand>
        <name>substrate</name>
    </ligand>
</feature>
<feature type="binding site" evidence="1">
    <location>
        <position position="180"/>
    </location>
    <ligand>
        <name>substrate</name>
    </ligand>
</feature>
<feature type="binding site" evidence="1">
    <location>
        <position position="186"/>
    </location>
    <ligand>
        <name>ATP</name>
        <dbReference type="ChEBI" id="CHEBI:30616"/>
    </ligand>
</feature>
<feature type="binding site" evidence="1">
    <location>
        <position position="186"/>
    </location>
    <ligand>
        <name>Mn(2+)</name>
        <dbReference type="ChEBI" id="CHEBI:29035"/>
    </ligand>
</feature>
<feature type="binding site" evidence="1">
    <location>
        <position position="186"/>
    </location>
    <ligand>
        <name>substrate</name>
    </ligand>
</feature>
<feature type="binding site" evidence="1">
    <location>
        <position position="205"/>
    </location>
    <ligand>
        <name>ATP</name>
        <dbReference type="ChEBI" id="CHEBI:30616"/>
    </ligand>
</feature>
<feature type="binding site" evidence="1">
    <location>
        <position position="205"/>
    </location>
    <ligand>
        <name>Mn(2+)</name>
        <dbReference type="ChEBI" id="CHEBI:29035"/>
    </ligand>
</feature>
<feature type="binding site" evidence="1">
    <location>
        <begin position="221"/>
        <end position="229"/>
    </location>
    <ligand>
        <name>ATP</name>
        <dbReference type="ChEBI" id="CHEBI:30616"/>
    </ligand>
</feature>
<feature type="binding site" evidence="1">
    <location>
        <position position="242"/>
    </location>
    <ligand>
        <name>Mn(2+)</name>
        <dbReference type="ChEBI" id="CHEBI:29035"/>
    </ligand>
</feature>
<feature type="binding site" evidence="1">
    <location>
        <position position="270"/>
    </location>
    <ligand>
        <name>ATP</name>
        <dbReference type="ChEBI" id="CHEBI:30616"/>
    </ligand>
</feature>
<feature type="binding site" evidence="1">
    <location>
        <position position="306"/>
    </location>
    <ligand>
        <name>ATP</name>
        <dbReference type="ChEBI" id="CHEBI:30616"/>
    </ligand>
</feature>
<feature type="binding site" evidence="1">
    <location>
        <position position="306"/>
    </location>
    <ligand>
        <name>substrate</name>
    </ligand>
</feature>
<feature type="binding site" evidence="1">
    <location>
        <position position="433"/>
    </location>
    <ligand>
        <name>ATP</name>
        <dbReference type="ChEBI" id="CHEBI:30616"/>
    </ligand>
</feature>
<name>PCKA_COXB2</name>
<proteinExistence type="inferred from homology"/>
<reference key="1">
    <citation type="journal article" date="2009" name="Infect. Immun.">
        <title>Comparative genomics reveal extensive transposon-mediated genomic plasticity and diversity among potential effector proteins within the genus Coxiella.</title>
        <authorList>
            <person name="Beare P.A."/>
            <person name="Unsworth N."/>
            <person name="Andoh M."/>
            <person name="Voth D.E."/>
            <person name="Omsland A."/>
            <person name="Gilk S.D."/>
            <person name="Williams K.P."/>
            <person name="Sobral B.W."/>
            <person name="Kupko J.J. III"/>
            <person name="Porcella S.F."/>
            <person name="Samuel J.E."/>
            <person name="Heinzen R.A."/>
        </authorList>
    </citation>
    <scope>NUCLEOTIDE SEQUENCE [LARGE SCALE GENOMIC DNA]</scope>
    <source>
        <strain>CbuG_Q212</strain>
    </source>
</reference>
<dbReference type="EC" id="4.1.1.49" evidence="1"/>
<dbReference type="EMBL" id="CP001019">
    <property type="protein sequence ID" value="ACJ19327.1"/>
    <property type="molecule type" value="Genomic_DNA"/>
</dbReference>
<dbReference type="RefSeq" id="WP_012570560.1">
    <property type="nucleotide sequence ID" value="NC_011527.1"/>
</dbReference>
<dbReference type="SMR" id="B6J3V5"/>
<dbReference type="KEGG" id="cbg:CbuG_2094"/>
<dbReference type="HOGENOM" id="CLU_018247_0_1_6"/>
<dbReference type="UniPathway" id="UPA00138"/>
<dbReference type="GO" id="GO:0005829">
    <property type="term" value="C:cytosol"/>
    <property type="evidence" value="ECO:0007669"/>
    <property type="project" value="TreeGrafter"/>
</dbReference>
<dbReference type="GO" id="GO:0005524">
    <property type="term" value="F:ATP binding"/>
    <property type="evidence" value="ECO:0007669"/>
    <property type="project" value="UniProtKB-UniRule"/>
</dbReference>
<dbReference type="GO" id="GO:0046872">
    <property type="term" value="F:metal ion binding"/>
    <property type="evidence" value="ECO:0007669"/>
    <property type="project" value="UniProtKB-KW"/>
</dbReference>
<dbReference type="GO" id="GO:0004612">
    <property type="term" value="F:phosphoenolpyruvate carboxykinase (ATP) activity"/>
    <property type="evidence" value="ECO:0007669"/>
    <property type="project" value="UniProtKB-UniRule"/>
</dbReference>
<dbReference type="GO" id="GO:0006094">
    <property type="term" value="P:gluconeogenesis"/>
    <property type="evidence" value="ECO:0007669"/>
    <property type="project" value="UniProtKB-UniRule"/>
</dbReference>
<dbReference type="CDD" id="cd00484">
    <property type="entry name" value="PEPCK_ATP"/>
    <property type="match status" value="1"/>
</dbReference>
<dbReference type="Gene3D" id="3.90.228.20">
    <property type="match status" value="1"/>
</dbReference>
<dbReference type="Gene3D" id="3.40.449.10">
    <property type="entry name" value="Phosphoenolpyruvate Carboxykinase, domain 1"/>
    <property type="match status" value="1"/>
</dbReference>
<dbReference type="Gene3D" id="2.170.8.10">
    <property type="entry name" value="Phosphoenolpyruvate Carboxykinase, domain 2"/>
    <property type="match status" value="1"/>
</dbReference>
<dbReference type="HAMAP" id="MF_00453">
    <property type="entry name" value="PEPCK_ATP"/>
    <property type="match status" value="1"/>
</dbReference>
<dbReference type="InterPro" id="IPR001272">
    <property type="entry name" value="PEP_carboxykinase_ATP"/>
</dbReference>
<dbReference type="InterPro" id="IPR013035">
    <property type="entry name" value="PEP_carboxykinase_C"/>
</dbReference>
<dbReference type="InterPro" id="IPR008210">
    <property type="entry name" value="PEP_carboxykinase_N"/>
</dbReference>
<dbReference type="InterPro" id="IPR015994">
    <property type="entry name" value="PEPCK_ATP_CS"/>
</dbReference>
<dbReference type="NCBIfam" id="TIGR00224">
    <property type="entry name" value="pckA"/>
    <property type="match status" value="1"/>
</dbReference>
<dbReference type="NCBIfam" id="NF006820">
    <property type="entry name" value="PRK09344.1-2"/>
    <property type="match status" value="1"/>
</dbReference>
<dbReference type="NCBIfam" id="NF006821">
    <property type="entry name" value="PRK09344.1-3"/>
    <property type="match status" value="1"/>
</dbReference>
<dbReference type="NCBIfam" id="NF006823">
    <property type="entry name" value="PRK09344.1-5"/>
    <property type="match status" value="1"/>
</dbReference>
<dbReference type="PANTHER" id="PTHR30031:SF0">
    <property type="entry name" value="PHOSPHOENOLPYRUVATE CARBOXYKINASE (ATP)"/>
    <property type="match status" value="1"/>
</dbReference>
<dbReference type="PANTHER" id="PTHR30031">
    <property type="entry name" value="PHOSPHOENOLPYRUVATE CARBOXYKINASE ATP"/>
    <property type="match status" value="1"/>
</dbReference>
<dbReference type="Pfam" id="PF01293">
    <property type="entry name" value="PEPCK_ATP"/>
    <property type="match status" value="1"/>
</dbReference>
<dbReference type="PIRSF" id="PIRSF006294">
    <property type="entry name" value="PEP_crbxkin"/>
    <property type="match status" value="1"/>
</dbReference>
<dbReference type="SUPFAM" id="SSF68923">
    <property type="entry name" value="PEP carboxykinase N-terminal domain"/>
    <property type="match status" value="1"/>
</dbReference>
<dbReference type="SUPFAM" id="SSF53795">
    <property type="entry name" value="PEP carboxykinase-like"/>
    <property type="match status" value="1"/>
</dbReference>
<dbReference type="PROSITE" id="PS00532">
    <property type="entry name" value="PEPCK_ATP"/>
    <property type="match status" value="1"/>
</dbReference>
<gene>
    <name evidence="1" type="primary">pckA</name>
    <name type="ordered locus">CbuG_2094</name>
</gene>
<evidence type="ECO:0000255" key="1">
    <source>
        <dbReference type="HAMAP-Rule" id="MF_00453"/>
    </source>
</evidence>
<comment type="function">
    <text evidence="1">Involved in the gluconeogenesis. Catalyzes the conversion of oxaloacetate (OAA) to phosphoenolpyruvate (PEP) through direct phosphoryl transfer between the nucleoside triphosphate and OAA.</text>
</comment>
<comment type="catalytic activity">
    <reaction evidence="1">
        <text>oxaloacetate + ATP = phosphoenolpyruvate + ADP + CO2</text>
        <dbReference type="Rhea" id="RHEA:18617"/>
        <dbReference type="ChEBI" id="CHEBI:16452"/>
        <dbReference type="ChEBI" id="CHEBI:16526"/>
        <dbReference type="ChEBI" id="CHEBI:30616"/>
        <dbReference type="ChEBI" id="CHEBI:58702"/>
        <dbReference type="ChEBI" id="CHEBI:456216"/>
        <dbReference type="EC" id="4.1.1.49"/>
    </reaction>
</comment>
<comment type="cofactor">
    <cofactor evidence="1">
        <name>Mn(2+)</name>
        <dbReference type="ChEBI" id="CHEBI:29035"/>
    </cofactor>
    <text evidence="1">Binds 1 Mn(2+) ion per subunit.</text>
</comment>
<comment type="pathway">
    <text evidence="1">Carbohydrate biosynthesis; gluconeogenesis.</text>
</comment>
<comment type="subunit">
    <text evidence="1">Monomer.</text>
</comment>
<comment type="subcellular location">
    <subcellularLocation>
        <location evidence="1">Cytoplasm</location>
    </subcellularLocation>
</comment>
<comment type="similarity">
    <text evidence="1">Belongs to the phosphoenolpyruvate carboxykinase (ATP) family.</text>
</comment>
<keyword id="KW-0067">ATP-binding</keyword>
<keyword id="KW-0963">Cytoplasm</keyword>
<keyword id="KW-0210">Decarboxylase</keyword>
<keyword id="KW-0312">Gluconeogenesis</keyword>
<keyword id="KW-0456">Lyase</keyword>
<keyword id="KW-0464">Manganese</keyword>
<keyword id="KW-0479">Metal-binding</keyword>
<keyword id="KW-0547">Nucleotide-binding</keyword>
<accession>B6J3V5</accession>
<sequence length="517" mass="56801">MEQIAARVTYINLSPDELIQHAVKNGEGVLSSTGALAVTTGKRTGRSPKDRFIVKDEQTADQVAWGNINQPVEQRTFDQLWERALRYLSERAVYISHLQVGADDNYFLPLKVVTEFAWHNLFACDLFIRPSGDHANGKPSWVILSAPGLKTDPERDGVNSDGAVMINLSQRRVLLVGMPYAGEIKKAMFSVLNYLLPPHDVLPMHCAANAGQSGDVALFFGLSGTGKTTLSADPHRFLIGDDEHGWSATSVFNFEGGCYAKCIDLSQEREPMIWNAIRHGAIMENVVLDENGVPDYADARLTQNSRAAYPREYIPLRVENNRGRPPDAVLFLTCDLDGVLPPVALLTKEQAAYYFLSGYTALVGSTEVGSVKGVTSTFSTCFGAPFFPRPPTVYAELLMKRIEATGCQVYLVNTGWTGGAYGKGGERFSIPTTRAIVNAVLSGKLKEGPTEVLSGFNLTIPKSALGVDDHLLNPRKTWEDVSAYDVRAQRLIQKFRENFEKFKVPAAIREAGPSDVH</sequence>
<organism>
    <name type="scientific">Coxiella burnetii (strain CbuG_Q212)</name>
    <name type="common">Coxiella burnetii (strain Q212)</name>
    <dbReference type="NCBI Taxonomy" id="434923"/>
    <lineage>
        <taxon>Bacteria</taxon>
        <taxon>Pseudomonadati</taxon>
        <taxon>Pseudomonadota</taxon>
        <taxon>Gammaproteobacteria</taxon>
        <taxon>Legionellales</taxon>
        <taxon>Coxiellaceae</taxon>
        <taxon>Coxiella</taxon>
    </lineage>
</organism>